<evidence type="ECO:0000269" key="1">
    <source ref="1"/>
</evidence>
<evidence type="ECO:0000303" key="2">
    <source ref="1"/>
</evidence>
<evidence type="ECO:0000305" key="3"/>
<reference evidence="3" key="1">
    <citation type="submission" date="2009-07" db="UniProtKB">
        <title>Brazilian scorpion Brotheas amazonicus venom peptidomics.</title>
        <authorList>
            <person name="Ireno I.C."/>
            <person name="Rates B.A."/>
            <person name="Pimenta A.M.C."/>
        </authorList>
    </citation>
    <scope>PROTEIN SEQUENCE</scope>
    <scope>SUBCELLULAR LOCATION</scope>
    <scope>TISSUE SPECIFICITY</scope>
    <source>
        <tissue evidence="1">Venom</tissue>
    </source>
</reference>
<organism>
    <name type="scientific">Brotheas amazonicus</name>
    <name type="common">Scorpion</name>
    <dbReference type="NCBI Taxonomy" id="662117"/>
    <lineage>
        <taxon>Eukaryota</taxon>
        <taxon>Metazoa</taxon>
        <taxon>Ecdysozoa</taxon>
        <taxon>Arthropoda</taxon>
        <taxon>Chelicerata</taxon>
        <taxon>Arachnida</taxon>
        <taxon>Scorpiones</taxon>
        <taxon>Iurida</taxon>
        <taxon>Chactoidea</taxon>
        <taxon>Chactidae</taxon>
        <taxon>Brotheinae</taxon>
        <taxon>Brotheini</taxon>
        <taxon>Brotheina</taxon>
        <taxon>Brotheas</taxon>
    </lineage>
</organism>
<feature type="peptide" id="PRO_0000383655" description="Venom peptide 2" evidence="1">
    <location>
        <begin position="1" status="less than"/>
        <end position="9" status="greater than"/>
    </location>
</feature>
<feature type="non-terminal residue" evidence="2">
    <location>
        <position position="1"/>
    </location>
</feature>
<feature type="non-terminal residue" evidence="2">
    <location>
        <position position="9"/>
    </location>
</feature>
<protein>
    <recommendedName>
        <fullName evidence="2">Venom peptide 2</fullName>
    </recommendedName>
    <alternativeName>
        <fullName evidence="2">BaP-2</fullName>
    </alternativeName>
</protein>
<accession>P86340</accession>
<name>VP2_BROAA</name>
<proteinExistence type="evidence at protein level"/>
<comment type="subcellular location">
    <subcellularLocation>
        <location evidence="1">Secreted</location>
    </subcellularLocation>
</comment>
<comment type="tissue specificity">
    <text evidence="1">Expressed by the venom gland.</text>
</comment>
<dbReference type="GO" id="GO:0005576">
    <property type="term" value="C:extracellular region"/>
    <property type="evidence" value="ECO:0007669"/>
    <property type="project" value="UniProtKB-SubCell"/>
</dbReference>
<sequence>IWSGIQSAF</sequence>
<keyword id="KW-0903">Direct protein sequencing</keyword>
<keyword id="KW-0964">Secreted</keyword>